<proteinExistence type="evidence at transcript level"/>
<feature type="chain" id="PRO_0000249896" description="Probable tRNA (uracil-O(2)-)-methyltransferase">
    <location>
        <begin position="1"/>
        <end position="668"/>
    </location>
</feature>
<feature type="zinc finger region" description="C3H1-type" evidence="2">
    <location>
        <begin position="620"/>
        <end position="649"/>
    </location>
</feature>
<feature type="region of interest" description="Disordered" evidence="3">
    <location>
        <begin position="441"/>
        <end position="460"/>
    </location>
</feature>
<feature type="sequence conflict" description="In Ref. 1; AAH43909." evidence="4" ref="1">
    <original>T</original>
    <variation>K</variation>
    <location>
        <position position="143"/>
    </location>
</feature>
<feature type="sequence conflict" description="In Ref. 1; AAH43909." evidence="4" ref="1">
    <original>R</original>
    <variation>Q</variation>
    <location>
        <position position="429"/>
    </location>
</feature>
<feature type="sequence conflict" description="In Ref. 1; AAH43909." evidence="4" ref="1">
    <original>K</original>
    <variation>R</variation>
    <location>
        <position position="531"/>
    </location>
</feature>
<feature type="sequence conflict" description="In Ref. 1; AAH43909." evidence="4" ref="1">
    <original>A</original>
    <variation>T</variation>
    <location>
        <position position="560"/>
    </location>
</feature>
<dbReference type="EC" id="2.1.1.211"/>
<dbReference type="EMBL" id="BC043909">
    <property type="protein sequence ID" value="AAH43909.1"/>
    <property type="status" value="ALT_SEQ"/>
    <property type="molecule type" value="mRNA"/>
</dbReference>
<dbReference type="EMBL" id="BC099012">
    <property type="protein sequence ID" value="AAH99012.1"/>
    <property type="molecule type" value="mRNA"/>
</dbReference>
<dbReference type="RefSeq" id="NP_001082524.1">
    <property type="nucleotide sequence ID" value="NM_001089055.1"/>
</dbReference>
<dbReference type="DNASU" id="398534"/>
<dbReference type="GeneID" id="398534"/>
<dbReference type="KEGG" id="xla:398534"/>
<dbReference type="AGR" id="Xenbase:XB-GENE-991929"/>
<dbReference type="CTD" id="398534"/>
<dbReference type="Xenbase" id="XB-GENE-991929">
    <property type="gene designation" value="trmt44.L"/>
</dbReference>
<dbReference type="OrthoDB" id="10047021at2759"/>
<dbReference type="Proteomes" id="UP000186698">
    <property type="component" value="Chromosome 1L"/>
</dbReference>
<dbReference type="Bgee" id="398534">
    <property type="expression patterns" value="Expressed in egg cell and 19 other cell types or tissues"/>
</dbReference>
<dbReference type="GO" id="GO:0005737">
    <property type="term" value="C:cytoplasm"/>
    <property type="evidence" value="ECO:0007669"/>
    <property type="project" value="UniProtKB-SubCell"/>
</dbReference>
<dbReference type="GO" id="GO:0016300">
    <property type="term" value="F:tRNA (uridine) methyltransferase activity"/>
    <property type="evidence" value="ECO:0000318"/>
    <property type="project" value="GO_Central"/>
</dbReference>
<dbReference type="GO" id="GO:0141101">
    <property type="term" value="F:tRNA(Ser) (uridine(44)-2'-O-)-methyltransferase activity"/>
    <property type="evidence" value="ECO:0007669"/>
    <property type="project" value="UniProtKB-EC"/>
</dbReference>
<dbReference type="GO" id="GO:0008270">
    <property type="term" value="F:zinc ion binding"/>
    <property type="evidence" value="ECO:0007669"/>
    <property type="project" value="UniProtKB-KW"/>
</dbReference>
<dbReference type="GO" id="GO:0030488">
    <property type="term" value="P:tRNA methylation"/>
    <property type="evidence" value="ECO:0000318"/>
    <property type="project" value="GO_Central"/>
</dbReference>
<dbReference type="Gene3D" id="4.10.1000.10">
    <property type="entry name" value="Zinc finger, CCCH-type"/>
    <property type="match status" value="1"/>
</dbReference>
<dbReference type="InterPro" id="IPR011671">
    <property type="entry name" value="tRNA_uracil_MeTrfase"/>
</dbReference>
<dbReference type="InterPro" id="IPR000571">
    <property type="entry name" value="Znf_CCCH"/>
</dbReference>
<dbReference type="PANTHER" id="PTHR21210">
    <property type="entry name" value="TRNA (URACIL-O(2)-)-METHYLTRANSFERASE-RELATED"/>
    <property type="match status" value="1"/>
</dbReference>
<dbReference type="PANTHER" id="PTHR21210:SF0">
    <property type="entry name" value="TRNA (URACIL-O(2)-)-METHYLTRANSFERASE-RELATED"/>
    <property type="match status" value="1"/>
</dbReference>
<dbReference type="Pfam" id="PF07757">
    <property type="entry name" value="AdoMet_MTase"/>
    <property type="match status" value="1"/>
</dbReference>
<dbReference type="PROSITE" id="PS50103">
    <property type="entry name" value="ZF_C3H1"/>
    <property type="match status" value="1"/>
</dbReference>
<keyword id="KW-0963">Cytoplasm</keyword>
<keyword id="KW-0479">Metal-binding</keyword>
<keyword id="KW-0489">Methyltransferase</keyword>
<keyword id="KW-1185">Reference proteome</keyword>
<keyword id="KW-0949">S-adenosyl-L-methionine</keyword>
<keyword id="KW-0808">Transferase</keyword>
<keyword id="KW-0819">tRNA processing</keyword>
<keyword id="KW-0862">Zinc</keyword>
<keyword id="KW-0863">Zinc-finger</keyword>
<evidence type="ECO:0000250" key="1"/>
<evidence type="ECO:0000255" key="2">
    <source>
        <dbReference type="PROSITE-ProRule" id="PRU00723"/>
    </source>
</evidence>
<evidence type="ECO:0000256" key="3">
    <source>
        <dbReference type="SAM" id="MobiDB-lite"/>
    </source>
</evidence>
<evidence type="ECO:0000305" key="4"/>
<gene>
    <name type="primary">trmt44</name>
    <name type="synonym">mettl19</name>
</gene>
<name>TRM44_XENLA</name>
<comment type="function">
    <text evidence="1">Probable adenosyl-L-methionine (AdoMet)-dependent tRNA (uracil-O(2)-)-methyltransferase.</text>
</comment>
<comment type="catalytic activity">
    <reaction>
        <text>uridine(44) in tRNA(Ser) + S-adenosyl-L-methionine = 2'-O-methyluridine(44) in tRNA(Ser) + S-adenosyl-L-homocysteine + H(+)</text>
        <dbReference type="Rhea" id="RHEA:43100"/>
        <dbReference type="Rhea" id="RHEA-COMP:10339"/>
        <dbReference type="Rhea" id="RHEA-COMP:10340"/>
        <dbReference type="ChEBI" id="CHEBI:15378"/>
        <dbReference type="ChEBI" id="CHEBI:57856"/>
        <dbReference type="ChEBI" id="CHEBI:59789"/>
        <dbReference type="ChEBI" id="CHEBI:65315"/>
        <dbReference type="ChEBI" id="CHEBI:74478"/>
        <dbReference type="EC" id="2.1.1.211"/>
    </reaction>
</comment>
<comment type="subcellular location">
    <subcellularLocation>
        <location evidence="4">Cytoplasm</location>
    </subcellularLocation>
</comment>
<comment type="similarity">
    <text evidence="4">Belongs to the TRM44 family.</text>
</comment>
<comment type="sequence caution" evidence="4">
    <conflict type="miscellaneous discrepancy">
        <sequence resource="EMBL-CDS" id="AAH43909"/>
    </conflict>
    <text>Contaminating sequence. Potential poly-A sequence.</text>
</comment>
<accession>Q4KLT3</accession>
<accession>Q7ZY77</accession>
<organism>
    <name type="scientific">Xenopus laevis</name>
    <name type="common">African clawed frog</name>
    <dbReference type="NCBI Taxonomy" id="8355"/>
    <lineage>
        <taxon>Eukaryota</taxon>
        <taxon>Metazoa</taxon>
        <taxon>Chordata</taxon>
        <taxon>Craniata</taxon>
        <taxon>Vertebrata</taxon>
        <taxon>Euteleostomi</taxon>
        <taxon>Amphibia</taxon>
        <taxon>Batrachia</taxon>
        <taxon>Anura</taxon>
        <taxon>Pipoidea</taxon>
        <taxon>Pipidae</taxon>
        <taxon>Xenopodinae</taxon>
        <taxon>Xenopus</taxon>
        <taxon>Xenopus</taxon>
    </lineage>
</organism>
<reference key="1">
    <citation type="submission" date="2005-07" db="EMBL/GenBank/DDBJ databases">
        <authorList>
            <consortium name="NIH - Xenopus Gene Collection (XGC) project"/>
        </authorList>
    </citation>
    <scope>NUCLEOTIDE SEQUENCE [LARGE SCALE MRNA]</scope>
    <source>
        <tissue>Egg</tissue>
        <tissue>Embryo</tissue>
    </source>
</reference>
<protein>
    <recommendedName>
        <fullName>Probable tRNA (uracil-O(2)-)-methyltransferase</fullName>
        <ecNumber>2.1.1.211</ecNumber>
    </recommendedName>
    <alternativeName>
        <fullName>Methyltransferase-like protein 19</fullName>
    </alternativeName>
</protein>
<sequence>MPELASVLVRDERSVLPGGFWAAVAVWLEKPQVLNKRLCGSTVGKKWDHVGEESESEGIDVETALAALLEDMSGPGRDEEMLKLISGYGKREEDSGSLTLRTLIPKSNPHFPSCQPRCEIVIRDLPNSVVTFLPLDEANQFKTNNIYQIRLAHVQDDEWSISLYTLCSEAWESDGVVYPKITWMKNELLSKLAKWSTEDKKSEFKSTLSLVPVDKYSRLYQNLKEKYRDMVKVWPEVTDPEKFVYEDVAIATYLLIIWEEERSQNQLKVKQSFVDLGCGNGLLVHILSNEGHPGRGIDVRRRKIWDMYGPQTILEESAILPNDDYLFPDTDWLIGNHSDELTPWLPVIASRSSYSCRYFVLPCCFFNFYGKYNRKSSKKTQYREYLDFVKEVGQQCGFNVEEDCLRIPSTKRVCLIGMSRTYPLTQEKRIDEQRTRYIKSQHTDSLHISTKSSLDKDDPPPLNCHAKNGQVDNVDSSLVQSEKLPGSWMPGFQPREKEEPIRNCALLPRDFIDETVLQVAKLLLYSNTKEKETPITDQSETVWNTGRSLTLREVAEHLHADTLQKLKNECGGLQTLLRNNHQVFKVINSNVSIRDWQKDTPTNTKKRKPEAKRTVPSDVLKTRLCWFYVHHPNGCPRVAKSCPYAHGAEELRPSFISRRKNPRNKLCT</sequence>